<protein>
    <recommendedName>
        <fullName>Cytochrome c1-1, heme protein, mitochondrial</fullName>
        <ecNumber>7.1.1.8</ecNumber>
    </recommendedName>
    <alternativeName>
        <fullName>Complex III subunit 4-1</fullName>
    </alternativeName>
    <alternativeName>
        <fullName>Complex III subunit IV-1</fullName>
    </alternativeName>
    <alternativeName>
        <fullName>Cytochrome b-c1 complex subunit 4-1</fullName>
    </alternativeName>
    <alternativeName>
        <fullName>Ubiquinol-cytochrome-c reductase complex cytochrome c1 subunit 1</fullName>
        <shortName>Cytochrome c-1-1</shortName>
    </alternativeName>
</protein>
<organism>
    <name type="scientific">Solanum tuberosum</name>
    <name type="common">Potato</name>
    <dbReference type="NCBI Taxonomy" id="4113"/>
    <lineage>
        <taxon>Eukaryota</taxon>
        <taxon>Viridiplantae</taxon>
        <taxon>Streptophyta</taxon>
        <taxon>Embryophyta</taxon>
        <taxon>Tracheophyta</taxon>
        <taxon>Spermatophyta</taxon>
        <taxon>Magnoliopsida</taxon>
        <taxon>eudicotyledons</taxon>
        <taxon>Gunneridae</taxon>
        <taxon>Pentapetalae</taxon>
        <taxon>asterids</taxon>
        <taxon>lamiids</taxon>
        <taxon>Solanales</taxon>
        <taxon>Solanaceae</taxon>
        <taxon>Solanoideae</taxon>
        <taxon>Solaneae</taxon>
        <taxon>Solanum</taxon>
    </lineage>
</organism>
<dbReference type="EC" id="7.1.1.8"/>
<dbReference type="EMBL" id="X62124">
    <property type="protein sequence ID" value="CAA44055.1"/>
    <property type="molecule type" value="mRNA"/>
</dbReference>
<dbReference type="EMBL" id="S66866">
    <property type="protein sequence ID" value="AAB28813.2"/>
    <property type="molecule type" value="Genomic_DNA"/>
</dbReference>
<dbReference type="PIR" id="S20014">
    <property type="entry name" value="S20014"/>
</dbReference>
<dbReference type="RefSeq" id="NP_001275377.1">
    <property type="nucleotide sequence ID" value="NM_001288448.1"/>
</dbReference>
<dbReference type="SMR" id="P25076"/>
<dbReference type="STRING" id="4113.P25076"/>
<dbReference type="PaxDb" id="4113-PGSC0003DMT400073387"/>
<dbReference type="GeneID" id="102589911"/>
<dbReference type="KEGG" id="sot:102589911"/>
<dbReference type="eggNOG" id="KOG3052">
    <property type="taxonomic scope" value="Eukaryota"/>
</dbReference>
<dbReference type="InParanoid" id="P25076"/>
<dbReference type="OrthoDB" id="5925at2759"/>
<dbReference type="Proteomes" id="UP000011115">
    <property type="component" value="Unassembled WGS sequence"/>
</dbReference>
<dbReference type="ExpressionAtlas" id="P25076">
    <property type="expression patterns" value="baseline"/>
</dbReference>
<dbReference type="GO" id="GO:0005743">
    <property type="term" value="C:mitochondrial inner membrane"/>
    <property type="evidence" value="ECO:0007669"/>
    <property type="project" value="UniProtKB-SubCell"/>
</dbReference>
<dbReference type="GO" id="GO:0020037">
    <property type="term" value="F:heme binding"/>
    <property type="evidence" value="ECO:0007669"/>
    <property type="project" value="InterPro"/>
</dbReference>
<dbReference type="GO" id="GO:0046872">
    <property type="term" value="F:metal ion binding"/>
    <property type="evidence" value="ECO:0007669"/>
    <property type="project" value="UniProtKB-KW"/>
</dbReference>
<dbReference type="GO" id="GO:0008121">
    <property type="term" value="F:ubiquinol-cytochrome-c reductase activity"/>
    <property type="evidence" value="ECO:0007669"/>
    <property type="project" value="UniProtKB-EC"/>
</dbReference>
<dbReference type="FunFam" id="1.10.760.10:FF:000002">
    <property type="entry name" value="Cytochrome c1, heme protein"/>
    <property type="match status" value="1"/>
</dbReference>
<dbReference type="FunFam" id="1.20.5.100:FF:000003">
    <property type="entry name" value="Cytochrome c1, heme protein, mitochondrial"/>
    <property type="match status" value="1"/>
</dbReference>
<dbReference type="Gene3D" id="1.10.760.10">
    <property type="entry name" value="Cytochrome c-like domain"/>
    <property type="match status" value="1"/>
</dbReference>
<dbReference type="Gene3D" id="1.20.5.100">
    <property type="entry name" value="Cytochrome c1, transmembrane anchor, C-terminal"/>
    <property type="match status" value="1"/>
</dbReference>
<dbReference type="InterPro" id="IPR009056">
    <property type="entry name" value="Cyt_c-like_dom"/>
</dbReference>
<dbReference type="InterPro" id="IPR036909">
    <property type="entry name" value="Cyt_c-like_dom_sf"/>
</dbReference>
<dbReference type="InterPro" id="IPR002326">
    <property type="entry name" value="Cyt_c1"/>
</dbReference>
<dbReference type="InterPro" id="IPR021157">
    <property type="entry name" value="Cyt_c1_TM_anchor_C"/>
</dbReference>
<dbReference type="PANTHER" id="PTHR10266">
    <property type="entry name" value="CYTOCHROME C1"/>
    <property type="match status" value="1"/>
</dbReference>
<dbReference type="PANTHER" id="PTHR10266:SF3">
    <property type="entry name" value="CYTOCHROME C1, HEME PROTEIN, MITOCHONDRIAL"/>
    <property type="match status" value="1"/>
</dbReference>
<dbReference type="Pfam" id="PF02167">
    <property type="entry name" value="Cytochrom_C1"/>
    <property type="match status" value="1"/>
</dbReference>
<dbReference type="PRINTS" id="PR00603">
    <property type="entry name" value="CYTOCHROMEC1"/>
</dbReference>
<dbReference type="SUPFAM" id="SSF46626">
    <property type="entry name" value="Cytochrome c"/>
    <property type="match status" value="1"/>
</dbReference>
<dbReference type="SUPFAM" id="SSF81496">
    <property type="entry name" value="Cytochrome c1 subunit of cytochrome bc1 complex (Ubiquinol-cytochrome c reductase), transmembrane anchor"/>
    <property type="match status" value="1"/>
</dbReference>
<dbReference type="PROSITE" id="PS51007">
    <property type="entry name" value="CYTC"/>
    <property type="match status" value="1"/>
</dbReference>
<name>CY11_SOLTU</name>
<keyword id="KW-0249">Electron transport</keyword>
<keyword id="KW-0349">Heme</keyword>
<keyword id="KW-0408">Iron</keyword>
<keyword id="KW-0472">Membrane</keyword>
<keyword id="KW-0479">Metal-binding</keyword>
<keyword id="KW-0496">Mitochondrion</keyword>
<keyword id="KW-0999">Mitochondrion inner membrane</keyword>
<keyword id="KW-1185">Reference proteome</keyword>
<keyword id="KW-0679">Respiratory chain</keyword>
<keyword id="KW-0809">Transit peptide</keyword>
<keyword id="KW-1278">Translocase</keyword>
<keyword id="KW-0812">Transmembrane</keyword>
<keyword id="KW-1133">Transmembrane helix</keyword>
<keyword id="KW-0813">Transport</keyword>
<accession>P25076</accession>
<accession>Q41207</accession>
<sequence length="320" mass="35159">MSLGKKIRIGFDGFGRINRFITRGAAQRNDSKLPSRNDALKHGLDGLGSAGSKSFRALAAIGAGVSGLLSFATIAYSDEAEHGLECPNYPWPHEGILSSYDHASIRRGHQVYQQVCASCHSMSLISYRDLVGVAYTEEETKAMAAEIEVVDGPNDEGEMFTRPGKLSDRFPQPYANEAAARFANGGAYPPDLSLITKARHNGQNYVFALLTAYRDPPAGVSIREGLHYNPYFPGGAIAMPKMLNDGAVEYEDGIPATEAQMGKDVVSFLSWAAEPEMEERKLMGFKWIFVLSLALLQAAYYRRLRWSVLKSRKLVLDVVN</sequence>
<comment type="function">
    <text evidence="1">Component of the ubiquinol-cytochrome c oxidoreductase, a multisubunit transmembrane complex that is part of the mitochondrial electron transport chain which drives oxidative phosphorylation. The respiratory chain contains 3 multisubunit complexes succinate dehydrogenase (complex II, CII), ubiquinol-cytochrome c oxidoreductase (cytochrome b-c1 complex, complex III, CIII) and cytochrome c oxidase (complex IV, CIV), that cooperate to transfer electrons derived from NADH and succinate to molecular oxygen, creating an electrochemical gradient over the inner membrane that drives transmembrane transport and the ATP synthase. The cytochrome b-c1 complex catalyzes electron transfer from ubiquinol to cytochrome c, linking this redox reaction to translocation of protons across the mitochondrial inner membrane, with protons being carried across the membrane as hydrogens on the quinol. In the process called Q cycle, 2 protons are consumed from the matrix, 4 protons are released into the intermembrane space and 2 electrons are passed to cytochrome c. Cytochrome c1 is a catalytic core subunit containing a c-type heme. It transfers electrons from the [2Fe-2S] iron-sulfur cluster of the Rieske protein to cytochrome c.</text>
</comment>
<comment type="catalytic activity">
    <reaction evidence="1">
        <text>a quinol + 2 Fe(III)-[cytochrome c](out) = a quinone + 2 Fe(II)-[cytochrome c](out) + 2 H(+)(out)</text>
        <dbReference type="Rhea" id="RHEA:11484"/>
        <dbReference type="Rhea" id="RHEA-COMP:10350"/>
        <dbReference type="Rhea" id="RHEA-COMP:14399"/>
        <dbReference type="ChEBI" id="CHEBI:15378"/>
        <dbReference type="ChEBI" id="CHEBI:24646"/>
        <dbReference type="ChEBI" id="CHEBI:29033"/>
        <dbReference type="ChEBI" id="CHEBI:29034"/>
        <dbReference type="ChEBI" id="CHEBI:132124"/>
        <dbReference type="EC" id="7.1.1.8"/>
    </reaction>
</comment>
<comment type="cofactor">
    <cofactor evidence="1">
        <name>heme c</name>
        <dbReference type="ChEBI" id="CHEBI:61717"/>
    </cofactor>
    <text evidence="1">Binds 1 heme c group covalently per subunit.</text>
</comment>
<comment type="subunit">
    <text evidence="1">Component of the ubiquinol-cytochrome c oxidoreductase (cytochrome b-c1 complex, complex III, CIII), a multisubunit enzyme composed of 3 respiratory subunits cytochrome b, cytochrome c1 and Rieske protein, 2 core protein subunits, and additional low-molecular weight protein subunits. The complex exists as an obligatory dimer and forms supercomplexes (SCs) in the inner mitochondrial membrane with cytochrome c oxidase (complex IV, CIV).</text>
</comment>
<comment type="subcellular location">
    <subcellularLocation>
        <location evidence="1">Mitochondrion inner membrane</location>
        <topology evidence="1">Single-pass membrane protein</topology>
    </subcellularLocation>
</comment>
<comment type="tissue specificity">
    <text>In all tissues analyzed.</text>
</comment>
<comment type="similarity">
    <text evidence="4">Belongs to the cytochrome c family.</text>
</comment>
<reference key="1">
    <citation type="journal article" date="1992" name="Mol. Gen. Genet.">
        <title>Cytochrome c1 from potato: a protein with a presequence for targeting to the mitochondrial intermembrane space.</title>
        <authorList>
            <person name="Braun H.P."/>
            <person name="Emmermann M."/>
            <person name="Kruft V."/>
            <person name="Schmitz U.K."/>
        </authorList>
    </citation>
    <scope>NUCLEOTIDE SEQUENCE [MRNA]</scope>
    <source>
        <strain>cv. Desiree</strain>
        <tissue>Green leaf</tissue>
    </source>
</reference>
<reference key="2">
    <citation type="journal article" date="1993" name="Curr. Genet.">
        <title>The presequence of cytochrome c1 from potato mitochondria is encoded on four exons.</title>
        <authorList>
            <person name="Wegener S."/>
            <person name="Schmitz U.K."/>
        </authorList>
    </citation>
    <scope>NUCLEOTIDE SEQUENCE [GENOMIC DNA]</scope>
    <source>
        <strain>cv. Desiree</strain>
    </source>
</reference>
<reference key="3">
    <citation type="journal article" date="2011" name="Nature">
        <title>Genome sequence and analysis of the tuber crop potato.</title>
        <authorList>
            <consortium name="The Potato Genome Sequencing Consortium"/>
        </authorList>
    </citation>
    <scope>NUCLEOTIDE SEQUENCE [LARGE SCALE GENOMIC DNA]</scope>
    <source>
        <strain>cv. DM1-3 516 R44</strain>
    </source>
</reference>
<gene>
    <name type="primary">CYCL</name>
</gene>
<feature type="transit peptide" description="Mitochondrion" evidence="2">
    <location>
        <begin position="1"/>
        <end position="77"/>
    </location>
</feature>
<feature type="chain" id="PRO_0000006557" description="Cytochrome c1-1, heme protein, mitochondrial">
    <location>
        <begin position="78"/>
        <end position="320"/>
    </location>
</feature>
<feature type="topological domain" description="Mitochondrial intermembrane" evidence="1">
    <location>
        <begin position="78"/>
        <end position="280"/>
    </location>
</feature>
<feature type="transmembrane region" description="Helical" evidence="2">
    <location>
        <begin position="281"/>
        <end position="301"/>
    </location>
</feature>
<feature type="topological domain" description="Mitochondrial matrix" evidence="1">
    <location>
        <begin position="302"/>
        <end position="320"/>
    </location>
</feature>
<feature type="domain" description="Cytochrome c" evidence="3">
    <location>
        <begin position="103"/>
        <end position="210"/>
    </location>
</feature>
<feature type="binding site" description="covalent" evidence="1">
    <location>
        <position position="116"/>
    </location>
    <ligand>
        <name>heme c</name>
        <dbReference type="ChEBI" id="CHEBI:61717"/>
    </ligand>
</feature>
<feature type="binding site" description="covalent" evidence="1">
    <location>
        <position position="119"/>
    </location>
    <ligand>
        <name>heme c</name>
        <dbReference type="ChEBI" id="CHEBI:61717"/>
    </ligand>
</feature>
<feature type="binding site" description="axial binding residue" evidence="1">
    <location>
        <position position="120"/>
    </location>
    <ligand>
        <name>heme c</name>
        <dbReference type="ChEBI" id="CHEBI:61717"/>
    </ligand>
    <ligandPart>
        <name>Fe</name>
        <dbReference type="ChEBI" id="CHEBI:18248"/>
    </ligandPart>
</feature>
<feature type="binding site" description="axial binding residue" evidence="1">
    <location>
        <position position="239"/>
    </location>
    <ligand>
        <name>heme c</name>
        <dbReference type="ChEBI" id="CHEBI:61717"/>
    </ligand>
    <ligandPart>
        <name>Fe</name>
        <dbReference type="ChEBI" id="CHEBI:18248"/>
    </ligandPart>
</feature>
<feature type="sequence conflict" description="In Ref. 2; AAB28813." evidence="4" ref="2">
    <original>N</original>
    <variation>S</variation>
    <location>
        <position position="88"/>
    </location>
</feature>
<feature type="sequence conflict" description="In Ref. 2; AAB28813." evidence="4" ref="2">
    <original>A</original>
    <variation>G</variation>
    <location>
        <position position="212"/>
    </location>
</feature>
<evidence type="ECO:0000250" key="1">
    <source>
        <dbReference type="UniProtKB" id="P07143"/>
    </source>
</evidence>
<evidence type="ECO:0000255" key="2"/>
<evidence type="ECO:0000255" key="3">
    <source>
        <dbReference type="PROSITE-ProRule" id="PRU00433"/>
    </source>
</evidence>
<evidence type="ECO:0000305" key="4"/>
<proteinExistence type="evidence at transcript level"/>